<geneLocation type="chloroplast"/>
<proteinExistence type="inferred from homology"/>
<dbReference type="EMBL" id="AF543846">
    <property type="protein sequence ID" value="AAN34805.1"/>
    <property type="molecule type" value="Genomic_DNA"/>
</dbReference>
<dbReference type="RefSeq" id="YP_010043941.1">
    <property type="nucleotide sequence ID" value="NC_054256.1"/>
</dbReference>
<dbReference type="GeneID" id="63652076"/>
<dbReference type="GO" id="GO:0009507">
    <property type="term" value="C:chloroplast"/>
    <property type="evidence" value="ECO:0007669"/>
    <property type="project" value="UniProtKB-SubCell"/>
</dbReference>
<dbReference type="GO" id="GO:0003723">
    <property type="term" value="F:RNA binding"/>
    <property type="evidence" value="ECO:0007669"/>
    <property type="project" value="UniProtKB-KW"/>
</dbReference>
<dbReference type="GO" id="GO:0006397">
    <property type="term" value="P:mRNA processing"/>
    <property type="evidence" value="ECO:0007669"/>
    <property type="project" value="UniProtKB-KW"/>
</dbReference>
<dbReference type="GO" id="GO:0008380">
    <property type="term" value="P:RNA splicing"/>
    <property type="evidence" value="ECO:0007669"/>
    <property type="project" value="UniProtKB-UniRule"/>
</dbReference>
<dbReference type="GO" id="GO:0008033">
    <property type="term" value="P:tRNA processing"/>
    <property type="evidence" value="ECO:0007669"/>
    <property type="project" value="UniProtKB-KW"/>
</dbReference>
<dbReference type="HAMAP" id="MF_01390">
    <property type="entry name" value="MatK"/>
    <property type="match status" value="1"/>
</dbReference>
<dbReference type="InterPro" id="IPR024937">
    <property type="entry name" value="Domain_X"/>
</dbReference>
<dbReference type="InterPro" id="IPR002866">
    <property type="entry name" value="Maturase_MatK"/>
</dbReference>
<dbReference type="InterPro" id="IPR024942">
    <property type="entry name" value="Maturase_MatK_N"/>
</dbReference>
<dbReference type="PANTHER" id="PTHR34811">
    <property type="entry name" value="MATURASE K"/>
    <property type="match status" value="1"/>
</dbReference>
<dbReference type="PANTHER" id="PTHR34811:SF1">
    <property type="entry name" value="MATURASE K"/>
    <property type="match status" value="1"/>
</dbReference>
<dbReference type="Pfam" id="PF01348">
    <property type="entry name" value="Intron_maturas2"/>
    <property type="match status" value="1"/>
</dbReference>
<dbReference type="Pfam" id="PF01824">
    <property type="entry name" value="MatK_N"/>
    <property type="match status" value="1"/>
</dbReference>
<keyword id="KW-0150">Chloroplast</keyword>
<keyword id="KW-0507">mRNA processing</keyword>
<keyword id="KW-0934">Plastid</keyword>
<keyword id="KW-0694">RNA-binding</keyword>
<keyword id="KW-0819">tRNA processing</keyword>
<feature type="chain" id="PRO_0000143342" description="Maturase K">
    <location>
        <begin position="1"/>
        <end position="508"/>
    </location>
</feature>
<gene>
    <name evidence="1" type="primary">matK</name>
</gene>
<evidence type="ECO:0000255" key="1">
    <source>
        <dbReference type="HAMAP-Rule" id="MF_01390"/>
    </source>
</evidence>
<organism>
    <name type="scientific">Coronilla varia</name>
    <name type="common">Crown vetch</name>
    <name type="synonym">Securigera varia</name>
    <dbReference type="NCBI Taxonomy" id="53861"/>
    <lineage>
        <taxon>Eukaryota</taxon>
        <taxon>Viridiplantae</taxon>
        <taxon>Streptophyta</taxon>
        <taxon>Embryophyta</taxon>
        <taxon>Tracheophyta</taxon>
        <taxon>Spermatophyta</taxon>
        <taxon>Magnoliopsida</taxon>
        <taxon>eudicotyledons</taxon>
        <taxon>Gunneridae</taxon>
        <taxon>Pentapetalae</taxon>
        <taxon>rosids</taxon>
        <taxon>fabids</taxon>
        <taxon>Fabales</taxon>
        <taxon>Fabaceae</taxon>
        <taxon>Papilionoideae</taxon>
        <taxon>50 kb inversion clade</taxon>
        <taxon>NPAAA clade</taxon>
        <taxon>Hologalegina</taxon>
        <taxon>robinioid clade</taxon>
        <taxon>Loteae</taxon>
        <taxon>Securigera</taxon>
    </lineage>
</organism>
<name>MATK_CORVR</name>
<comment type="function">
    <text evidence="1">Usually encoded in the trnK tRNA gene intron. Probably assists in splicing its own and other chloroplast group II introns.</text>
</comment>
<comment type="subcellular location">
    <subcellularLocation>
        <location>Plastid</location>
        <location>Chloroplast</location>
    </subcellularLocation>
</comment>
<comment type="similarity">
    <text evidence="1">Belongs to the intron maturase 2 family. MatK subfamily.</text>
</comment>
<sequence>MEEYQLYLELDRSRQQDFLYPLVFHEYVYGLAYSHDLNRSIFVENIGYDNKYSLLIVKRLITRMYRQNHLIISANDSNKNRFLRYNKNFDSQIISGGFAIVVEILFSLQLSSSLEEAEIIKSYKNLRSIHSIFPFFEDKVTYLNYISDIQVPYPIHLEILVQILRYWVKDAPFFHLLRLFLYDYCNWNSIIIPKKSIYTFSKNNTRFFFFLYNFYVCEYESIFFFLRTQSSHLRLKSFRFFFERIFFYAKKGHLVEVFVKDFFSTLTFFKDPFIHYVRYQGKSILASKNLPILMNKWKYYFIHLWQCYFDVWSQPGTIHINQLSEYSFHFLGYFLKGGLKHSVVRGQMLQKGFLIKIIIKKLDIIVPIIPIIRLLAKAKFCNVLGNPLSKPSWADLSDFDIIARFLRICRNLSHYYNGSSKKKSLYRIKYILRLSCIKTLACKHKSTVRAFLKRLGSEELLEEFFTEEEEILSLIFPRTPSTLRRLHRNRIWYLDIFFSNDNDLINHD</sequence>
<accession>Q8HUG7</accession>
<protein>
    <recommendedName>
        <fullName evidence="1">Maturase K</fullName>
    </recommendedName>
    <alternativeName>
        <fullName evidence="1">Intron maturase</fullName>
    </alternativeName>
</protein>
<reference key="1">
    <citation type="journal article" date="2003" name="Syst. Bot.">
        <title>Phylogeny of robinioid legumes (Fabaceae) revisited: Coursetia and Gliricidia recircumscribed, and a biogeographical appraisal of the Caribbean endemics.</title>
        <authorList>
            <person name="Lavin M."/>
            <person name="Wojciechowski M.F."/>
            <person name="Gasson P."/>
            <person name="Hughes C."/>
            <person name="Wheeler E."/>
        </authorList>
        <dbReference type="AGRICOLA" id="IND43620162"/>
    </citation>
    <scope>NUCLEOTIDE SEQUENCE [GENOMIC DNA]</scope>
</reference>